<reference key="1">
    <citation type="journal article" date="2008" name="BMC Genomics">
        <title>The genome of Aeromonas salmonicida subsp. salmonicida A449: insights into the evolution of a fish pathogen.</title>
        <authorList>
            <person name="Reith M.E."/>
            <person name="Singh R.K."/>
            <person name="Curtis B."/>
            <person name="Boyd J.M."/>
            <person name="Bouevitch A."/>
            <person name="Kimball J."/>
            <person name="Munholland J."/>
            <person name="Murphy C."/>
            <person name="Sarty D."/>
            <person name="Williams J."/>
            <person name="Nash J.H."/>
            <person name="Johnson S.C."/>
            <person name="Brown L.L."/>
        </authorList>
    </citation>
    <scope>NUCLEOTIDE SEQUENCE [LARGE SCALE GENOMIC DNA]</scope>
    <source>
        <strain>A449</strain>
    </source>
</reference>
<evidence type="ECO:0000255" key="1">
    <source>
        <dbReference type="HAMAP-Rule" id="MF_01187"/>
    </source>
</evidence>
<name>Y1553_AERS4</name>
<sequence>MALDIKLLDIIACPVCKGKLHYNKAVHELVCRFDKLAYPLEEGIPVLLENRARQLNSDEMPS</sequence>
<proteinExistence type="inferred from homology"/>
<protein>
    <recommendedName>
        <fullName evidence="1">UPF0434 protein ASA_1553</fullName>
    </recommendedName>
</protein>
<comment type="similarity">
    <text evidence="1">Belongs to the UPF0434 family.</text>
</comment>
<organism>
    <name type="scientific">Aeromonas salmonicida (strain A449)</name>
    <dbReference type="NCBI Taxonomy" id="382245"/>
    <lineage>
        <taxon>Bacteria</taxon>
        <taxon>Pseudomonadati</taxon>
        <taxon>Pseudomonadota</taxon>
        <taxon>Gammaproteobacteria</taxon>
        <taxon>Aeromonadales</taxon>
        <taxon>Aeromonadaceae</taxon>
        <taxon>Aeromonas</taxon>
    </lineage>
</organism>
<dbReference type="EMBL" id="CP000644">
    <property type="protein sequence ID" value="ABO89641.1"/>
    <property type="molecule type" value="Genomic_DNA"/>
</dbReference>
<dbReference type="RefSeq" id="WP_005320086.1">
    <property type="nucleotide sequence ID" value="NC_009348.1"/>
</dbReference>
<dbReference type="SMR" id="A4SL69"/>
<dbReference type="STRING" id="29491.GCA_000820065_03958"/>
<dbReference type="KEGG" id="asa:ASA_1553"/>
<dbReference type="eggNOG" id="COG2835">
    <property type="taxonomic scope" value="Bacteria"/>
</dbReference>
<dbReference type="HOGENOM" id="CLU_155659_3_1_6"/>
<dbReference type="Proteomes" id="UP000000225">
    <property type="component" value="Chromosome"/>
</dbReference>
<dbReference type="GO" id="GO:0005829">
    <property type="term" value="C:cytosol"/>
    <property type="evidence" value="ECO:0007669"/>
    <property type="project" value="TreeGrafter"/>
</dbReference>
<dbReference type="FunFam" id="2.20.25.10:FF:000002">
    <property type="entry name" value="UPF0434 protein YcaR"/>
    <property type="match status" value="1"/>
</dbReference>
<dbReference type="Gene3D" id="2.20.25.10">
    <property type="match status" value="1"/>
</dbReference>
<dbReference type="HAMAP" id="MF_01187">
    <property type="entry name" value="UPF0434"/>
    <property type="match status" value="1"/>
</dbReference>
<dbReference type="InterPro" id="IPR005651">
    <property type="entry name" value="Trm112-like"/>
</dbReference>
<dbReference type="PANTHER" id="PTHR33505:SF4">
    <property type="entry name" value="PROTEIN PREY, MITOCHONDRIAL"/>
    <property type="match status" value="1"/>
</dbReference>
<dbReference type="PANTHER" id="PTHR33505">
    <property type="entry name" value="ZGC:162634"/>
    <property type="match status" value="1"/>
</dbReference>
<dbReference type="Pfam" id="PF03966">
    <property type="entry name" value="Trm112p"/>
    <property type="match status" value="1"/>
</dbReference>
<dbReference type="SUPFAM" id="SSF158997">
    <property type="entry name" value="Trm112p-like"/>
    <property type="match status" value="1"/>
</dbReference>
<feature type="chain" id="PRO_0000291050" description="UPF0434 protein ASA_1553">
    <location>
        <begin position="1"/>
        <end position="62"/>
    </location>
</feature>
<gene>
    <name type="ordered locus">ASA_1553</name>
</gene>
<accession>A4SL69</accession>